<organism>
    <name type="scientific">Homo sapiens</name>
    <name type="common">Human</name>
    <dbReference type="NCBI Taxonomy" id="9606"/>
    <lineage>
        <taxon>Eukaryota</taxon>
        <taxon>Metazoa</taxon>
        <taxon>Chordata</taxon>
        <taxon>Craniata</taxon>
        <taxon>Vertebrata</taxon>
        <taxon>Euteleostomi</taxon>
        <taxon>Mammalia</taxon>
        <taxon>Eutheria</taxon>
        <taxon>Euarchontoglires</taxon>
        <taxon>Primates</taxon>
        <taxon>Haplorrhini</taxon>
        <taxon>Catarrhini</taxon>
        <taxon>Hominidae</taxon>
        <taxon>Homo</taxon>
    </lineage>
</organism>
<gene>
    <name evidence="4" type="primary">GOLGA6L22</name>
</gene>
<reference key="1">
    <citation type="journal article" date="2006" name="Nature">
        <title>Analysis of the DNA sequence and duplication history of human chromosome 15.</title>
        <authorList>
            <person name="Zody M.C."/>
            <person name="Garber M."/>
            <person name="Sharpe T."/>
            <person name="Young S.K."/>
            <person name="Rowen L."/>
            <person name="O'Neill K."/>
            <person name="Whittaker C.A."/>
            <person name="Kamal M."/>
            <person name="Chang J.L."/>
            <person name="Cuomo C.A."/>
            <person name="Dewar K."/>
            <person name="FitzGerald M.G."/>
            <person name="Kodira C.D."/>
            <person name="Madan A."/>
            <person name="Qin S."/>
            <person name="Yang X."/>
            <person name="Abbasi N."/>
            <person name="Abouelleil A."/>
            <person name="Arachchi H.M."/>
            <person name="Baradarani L."/>
            <person name="Birditt B."/>
            <person name="Bloom S."/>
            <person name="Bloom T."/>
            <person name="Borowsky M.L."/>
            <person name="Burke J."/>
            <person name="Butler J."/>
            <person name="Cook A."/>
            <person name="DeArellano K."/>
            <person name="DeCaprio D."/>
            <person name="Dorris L. III"/>
            <person name="Dors M."/>
            <person name="Eichler E.E."/>
            <person name="Engels R."/>
            <person name="Fahey J."/>
            <person name="Fleetwood P."/>
            <person name="Friedman C."/>
            <person name="Gearin G."/>
            <person name="Hall J.L."/>
            <person name="Hensley G."/>
            <person name="Johnson E."/>
            <person name="Jones C."/>
            <person name="Kamat A."/>
            <person name="Kaur A."/>
            <person name="Locke D.P."/>
            <person name="Madan A."/>
            <person name="Munson G."/>
            <person name="Jaffe D.B."/>
            <person name="Lui A."/>
            <person name="Macdonald P."/>
            <person name="Mauceli E."/>
            <person name="Naylor J.W."/>
            <person name="Nesbitt R."/>
            <person name="Nicol R."/>
            <person name="O'Leary S.B."/>
            <person name="Ratcliffe A."/>
            <person name="Rounsley S."/>
            <person name="She X."/>
            <person name="Sneddon K.M.B."/>
            <person name="Stewart S."/>
            <person name="Sougnez C."/>
            <person name="Stone S.M."/>
            <person name="Topham K."/>
            <person name="Vincent D."/>
            <person name="Wang S."/>
            <person name="Zimmer A.R."/>
            <person name="Birren B.W."/>
            <person name="Hood L."/>
            <person name="Lander E.S."/>
            <person name="Nusbaum C."/>
        </authorList>
    </citation>
    <scope>NUCLEOTIDE SEQUENCE [LARGE SCALE GENOMIC DNA]</scope>
</reference>
<proteinExistence type="inferred from homology"/>
<comment type="similarity">
    <text evidence="3">Belongs to the GOLGA6 family.</text>
</comment>
<dbReference type="EMBL" id="AC100757">
    <property type="status" value="NOT_ANNOTATED_CDS"/>
    <property type="molecule type" value="Genomic_DNA"/>
</dbReference>
<dbReference type="CCDS" id="CCDS91962.1"/>
<dbReference type="RefSeq" id="NP_001383885.1">
    <property type="nucleotide sequence ID" value="NM_001396956.1"/>
</dbReference>
<dbReference type="SMR" id="H0YM25"/>
<dbReference type="STRING" id="9606.ENSP00000483673"/>
<dbReference type="PhosphoSitePlus" id="H0YM25"/>
<dbReference type="BioMuta" id="GOLGA6L22"/>
<dbReference type="jPOST" id="H0YM25"/>
<dbReference type="MassIVE" id="H0YM25"/>
<dbReference type="PaxDb" id="9606-ENSP00000483673"/>
<dbReference type="PeptideAtlas" id="H0YM25"/>
<dbReference type="Ensembl" id="ENST00000622895.2">
    <property type="protein sequence ID" value="ENSP00000483673.2"/>
    <property type="gene ID" value="ENSG00000277865.6"/>
</dbReference>
<dbReference type="GeneID" id="440243"/>
<dbReference type="MANE-Select" id="ENST00000622895.2">
    <property type="protein sequence ID" value="ENSP00000483673.2"/>
    <property type="RefSeq nucleotide sequence ID" value="NM_001396956.1"/>
    <property type="RefSeq protein sequence ID" value="NP_001383885.1"/>
</dbReference>
<dbReference type="AGR" id="HGNC:50289"/>
<dbReference type="GeneCards" id="GOLGA6L22"/>
<dbReference type="HGNC" id="HGNC:50289">
    <property type="gene designation" value="GOLGA6L22"/>
</dbReference>
<dbReference type="HPA" id="ENSG00000277865">
    <property type="expression patterns" value="Tissue enriched (testis)"/>
</dbReference>
<dbReference type="neXtProt" id="NX_H0YM25"/>
<dbReference type="OpenTargets" id="ENSG00000277865"/>
<dbReference type="VEuPathDB" id="HostDB:ENSG00000277865"/>
<dbReference type="eggNOG" id="KOG4725">
    <property type="taxonomic scope" value="Eukaryota"/>
</dbReference>
<dbReference type="GeneTree" id="ENSGT00940000163338"/>
<dbReference type="InParanoid" id="H0YM25"/>
<dbReference type="OrthoDB" id="9540182at2759"/>
<dbReference type="PAN-GO" id="H0YM25">
    <property type="GO annotations" value="0 GO annotations based on evolutionary models"/>
</dbReference>
<dbReference type="TreeFam" id="TF316990"/>
<dbReference type="Pharos" id="H0YM25">
    <property type="development level" value="Tdark"/>
</dbReference>
<dbReference type="PRO" id="PR:H0YM25"/>
<dbReference type="Proteomes" id="UP000005640">
    <property type="component" value="Chromosome 15"/>
</dbReference>
<dbReference type="RNAct" id="H0YM25">
    <property type="molecule type" value="protein"/>
</dbReference>
<dbReference type="Bgee" id="ENSG00000277865">
    <property type="expression patterns" value="Expressed in right testis and 10 other cell types or tissues"/>
</dbReference>
<dbReference type="ExpressionAtlas" id="H0YM25">
    <property type="expression patterns" value="baseline and differential"/>
</dbReference>
<dbReference type="InterPro" id="IPR026737">
    <property type="entry name" value="GOLGA6L"/>
</dbReference>
<dbReference type="PANTHER" id="PTHR23143:SF31">
    <property type="entry name" value="GOLGIN SUBFAMILY A MEMBER 6-LIKE PROTEIN 1-RELATED"/>
    <property type="match status" value="1"/>
</dbReference>
<dbReference type="PANTHER" id="PTHR23143">
    <property type="entry name" value="TRICHOHYALIN-RELATED"/>
    <property type="match status" value="1"/>
</dbReference>
<protein>
    <recommendedName>
        <fullName evidence="3">Golgin subfamily A member 6-like protein 22</fullName>
    </recommendedName>
</protein>
<sequence length="854" mass="107774">MLMWPQPHLPTHPHLPTHPHLPTHPHLPTHPHLPTHPHLPTHPMMSKETRQSKLAEAKEQLTDHHPQTNPSVGTAASDTKKKKINNGTSPETTTSGGCHSPEDEQKASHQHQEALRRELEAQVHTIRILTCQKTELQMALYYSQHAVKQLEGEARDLISRLHDSWKFAGELEQALSAVTTQKKKADRYIEELTKERDALSLELYRNTITDEELKEKNAKLQEKLQLVESEKSEIQLNVKELKRKLERAKLLLPQQQLQAEADHLGKELQSVSAKLQAQVEENELWNRLNQQQEEKMWRQEEKIQEWEEKIQEQEEKIREQEEKIREQEEKMRRQEEMMWEKEEKMRRQEEMMWEKEEKIRELEEKMHEQEKIREQEEKRQEEEKIREQEKRQEQEAKMWRQEEKIREQEEKIREQEKKMWRQEEKIHEQEKIREEEKRQEQEEMWRQEEKIREQEEIWRQKEKMHEQEEKIRKQEEKVWRQEEKMHDQEEKIREQEEKVWRQEEKIREQEKKREQEEKMWRQEEKIREQEEKIREQEEMWREEEKMHEQEKIWEEEKRQEQEDKMWRQEEKIREQEEKVWRQEEKIREQEEKRQEQEEKMWKQEEKIREQEEKIREQEEKIREQEEKIREQEEMMQEQEEKMGEQEEKMQEQEKMRRQEEKIREQEEKIREQKEKIREQEEKIWEQEEKIREQEEMMQEQEEKMGEQEEKIWEQEEKMQEQEEKMRRQEEKIREQEKKIREQEEKIREQEEMMQEQEEKMGEQEEKMQEQEEKMRRQEEKIREQEKKIREQEEKIREQEEMMQEQEEKMWEQEEKMCEQEEKMQEQEEKMRRQEEKMWEQEVRLRQQEEKMQEH</sequence>
<accession>H0YM25</accession>
<accession>A0A087X0V3</accession>
<keyword id="KW-0175">Coiled coil</keyword>
<keyword id="KW-1185">Reference proteome</keyword>
<feature type="chain" id="PRO_0000429275" description="Golgin subfamily A member 6-like protein 22">
    <location>
        <begin position="1"/>
        <end position="854"/>
    </location>
</feature>
<feature type="region of interest" description="Disordered" evidence="2">
    <location>
        <begin position="1"/>
        <end position="114"/>
    </location>
</feature>
<feature type="region of interest" description="Disordered" evidence="2">
    <location>
        <begin position="320"/>
        <end position="348"/>
    </location>
</feature>
<feature type="region of interest" description="Disordered" evidence="2">
    <location>
        <begin position="366"/>
        <end position="447"/>
    </location>
</feature>
<feature type="region of interest" description="Disordered" evidence="2">
    <location>
        <begin position="481"/>
        <end position="568"/>
    </location>
</feature>
<feature type="region of interest" description="Disordered" evidence="2">
    <location>
        <begin position="581"/>
        <end position="681"/>
    </location>
</feature>
<feature type="region of interest" description="Disordered" evidence="2">
    <location>
        <begin position="714"/>
        <end position="854"/>
    </location>
</feature>
<feature type="coiled-coil region" evidence="1">
    <location>
        <begin position="103"/>
        <end position="854"/>
    </location>
</feature>
<feature type="compositionally biased region" description="Basic residues" evidence="2">
    <location>
        <begin position="15"/>
        <end position="35"/>
    </location>
</feature>
<feature type="compositionally biased region" description="Basic and acidic residues" evidence="2">
    <location>
        <begin position="45"/>
        <end position="66"/>
    </location>
</feature>
<feature type="compositionally biased region" description="Polar residues" evidence="2">
    <location>
        <begin position="67"/>
        <end position="77"/>
    </location>
</feature>
<feature type="compositionally biased region" description="Polar residues" evidence="2">
    <location>
        <begin position="85"/>
        <end position="97"/>
    </location>
</feature>
<feature type="compositionally biased region" description="Basic and acidic residues" evidence="2">
    <location>
        <begin position="100"/>
        <end position="114"/>
    </location>
</feature>
<name>GG6LV_HUMAN</name>
<evidence type="ECO:0000255" key="1"/>
<evidence type="ECO:0000256" key="2">
    <source>
        <dbReference type="SAM" id="MobiDB-lite"/>
    </source>
</evidence>
<evidence type="ECO:0000305" key="3"/>
<evidence type="ECO:0000312" key="4">
    <source>
        <dbReference type="HGNC" id="HGNC:50289"/>
    </source>
</evidence>